<sequence>MNKSESENDSEYHKEYSESSDPEDTSFISLNKEIQNIRYIISDIKSQTVDVIQNLNNNVKEYNAFIHKFQNEYKTDKISVNSSVCHLESRVHILEHEIKSIKQDNQMLFEKMRDMLTDNSRLFGIIFDILKDLETNPGNKK</sequence>
<dbReference type="EMBL" id="AY653733">
    <property type="protein sequence ID" value="AAV50654.1"/>
    <property type="molecule type" value="Genomic_DNA"/>
</dbReference>
<dbReference type="SMR" id="Q5UQW8"/>
<dbReference type="KEGG" id="vg:9925007"/>
<dbReference type="Proteomes" id="UP000001134">
    <property type="component" value="Genome"/>
</dbReference>
<reference key="1">
    <citation type="journal article" date="2004" name="Science">
        <title>The 1.2-megabase genome sequence of Mimivirus.</title>
        <authorList>
            <person name="Raoult D."/>
            <person name="Audic S."/>
            <person name="Robert C."/>
            <person name="Abergel C."/>
            <person name="Renesto P."/>
            <person name="Ogata H."/>
            <person name="La Scola B."/>
            <person name="Susan M."/>
            <person name="Claverie J.-M."/>
        </authorList>
    </citation>
    <scope>NUCLEOTIDE SEQUENCE [LARGE SCALE GENOMIC DNA]</scope>
    <source>
        <strain>Rowbotham-Bradford</strain>
    </source>
</reference>
<gene>
    <name type="ordered locus">MIMI_L385</name>
</gene>
<keyword id="KW-0175">Coiled coil</keyword>
<keyword id="KW-1185">Reference proteome</keyword>
<organismHost>
    <name type="scientific">Acanthamoeba polyphaga</name>
    <name type="common">Amoeba</name>
    <dbReference type="NCBI Taxonomy" id="5757"/>
</organismHost>
<feature type="chain" id="PRO_0000071276" description="Uncharacterized protein L385">
    <location>
        <begin position="1"/>
        <end position="141"/>
    </location>
</feature>
<feature type="region of interest" description="Disordered" evidence="2">
    <location>
        <begin position="1"/>
        <end position="24"/>
    </location>
</feature>
<feature type="coiled-coil region" evidence="1">
    <location>
        <begin position="52"/>
        <end position="115"/>
    </location>
</feature>
<feature type="compositionally biased region" description="Basic and acidic residues" evidence="2">
    <location>
        <begin position="1"/>
        <end position="17"/>
    </location>
</feature>
<proteinExistence type="predicted"/>
<organism>
    <name type="scientific">Acanthamoeba polyphaga mimivirus</name>
    <name type="common">APMV</name>
    <dbReference type="NCBI Taxonomy" id="212035"/>
    <lineage>
        <taxon>Viruses</taxon>
        <taxon>Varidnaviria</taxon>
        <taxon>Bamfordvirae</taxon>
        <taxon>Nucleocytoviricota</taxon>
        <taxon>Megaviricetes</taxon>
        <taxon>Imitervirales</taxon>
        <taxon>Mimiviridae</taxon>
        <taxon>Megamimivirinae</taxon>
        <taxon>Mimivirus</taxon>
        <taxon>Mimivirus bradfordmassiliense</taxon>
    </lineage>
</organism>
<evidence type="ECO:0000255" key="1"/>
<evidence type="ECO:0000256" key="2">
    <source>
        <dbReference type="SAM" id="MobiDB-lite"/>
    </source>
</evidence>
<accession>Q5UQW8</accession>
<protein>
    <recommendedName>
        <fullName>Uncharacterized protein L385</fullName>
    </recommendedName>
</protein>
<name>YL385_MIMIV</name>